<dbReference type="EMBL" id="CU928164">
    <property type="protein sequence ID" value="CAR17292.1"/>
    <property type="molecule type" value="Genomic_DNA"/>
</dbReference>
<dbReference type="RefSeq" id="YP_002407168.1">
    <property type="nucleotide sequence ID" value="NC_011750.1"/>
</dbReference>
<dbReference type="SMR" id="B7NS27"/>
<dbReference type="STRING" id="585057.ECIAI39_1158"/>
<dbReference type="KEGG" id="ect:ECIAI39_1158"/>
<dbReference type="PATRIC" id="fig|585057.6.peg.1212"/>
<dbReference type="HOGENOM" id="CLU_144160_0_0_6"/>
<dbReference type="Proteomes" id="UP000000749">
    <property type="component" value="Chromosome"/>
</dbReference>
<dbReference type="GO" id="GO:0005737">
    <property type="term" value="C:cytoplasm"/>
    <property type="evidence" value="ECO:0007669"/>
    <property type="project" value="UniProtKB-SubCell"/>
</dbReference>
<dbReference type="GO" id="GO:0003677">
    <property type="term" value="F:DNA binding"/>
    <property type="evidence" value="ECO:0007669"/>
    <property type="project" value="UniProtKB-UniRule"/>
</dbReference>
<dbReference type="GO" id="GO:0044780">
    <property type="term" value="P:bacterial-type flagellum assembly"/>
    <property type="evidence" value="ECO:0007669"/>
    <property type="project" value="InterPro"/>
</dbReference>
<dbReference type="GO" id="GO:0045893">
    <property type="term" value="P:positive regulation of DNA-templated transcription"/>
    <property type="evidence" value="ECO:0007669"/>
    <property type="project" value="InterPro"/>
</dbReference>
<dbReference type="GO" id="GO:1902208">
    <property type="term" value="P:regulation of bacterial-type flagellum assembly"/>
    <property type="evidence" value="ECO:0007669"/>
    <property type="project" value="UniProtKB-UniRule"/>
</dbReference>
<dbReference type="FunFam" id="1.10.4000.10:FF:000001">
    <property type="entry name" value="Flagellar transcriptional regulator FlhD"/>
    <property type="match status" value="1"/>
</dbReference>
<dbReference type="Gene3D" id="1.10.4000.10">
    <property type="entry name" value="Flagellar transcriptional activator FlhD"/>
    <property type="match status" value="1"/>
</dbReference>
<dbReference type="HAMAP" id="MF_00725">
    <property type="entry name" value="FlhD"/>
    <property type="match status" value="1"/>
</dbReference>
<dbReference type="InterPro" id="IPR023559">
    <property type="entry name" value="Flagellar_FlhD"/>
</dbReference>
<dbReference type="InterPro" id="IPR036194">
    <property type="entry name" value="FlhD_sf"/>
</dbReference>
<dbReference type="NCBIfam" id="NF002783">
    <property type="entry name" value="PRK02909.1-1"/>
    <property type="match status" value="1"/>
</dbReference>
<dbReference type="Pfam" id="PF05247">
    <property type="entry name" value="FlhD"/>
    <property type="match status" value="1"/>
</dbReference>
<dbReference type="SUPFAM" id="SSF63592">
    <property type="entry name" value="Flagellar transcriptional activator FlhD"/>
    <property type="match status" value="1"/>
</dbReference>
<protein>
    <recommendedName>
        <fullName evidence="1">Flagellar transcriptional regulator FlhD</fullName>
    </recommendedName>
</protein>
<proteinExistence type="inferred from homology"/>
<evidence type="ECO:0000255" key="1">
    <source>
        <dbReference type="HAMAP-Rule" id="MF_00725"/>
    </source>
</evidence>
<name>FLHD_ECO7I</name>
<organism>
    <name type="scientific">Escherichia coli O7:K1 (strain IAI39 / ExPEC)</name>
    <dbReference type="NCBI Taxonomy" id="585057"/>
    <lineage>
        <taxon>Bacteria</taxon>
        <taxon>Pseudomonadati</taxon>
        <taxon>Pseudomonadota</taxon>
        <taxon>Gammaproteobacteria</taxon>
        <taxon>Enterobacterales</taxon>
        <taxon>Enterobacteriaceae</taxon>
        <taxon>Escherichia</taxon>
    </lineage>
</organism>
<sequence length="119" mass="13618">MGIMHTSELLKHIYDINLSYLLLAQRLIVQDKASAMFRLGINEEMATTLAALTLPQMVKLAETNQLVCHFRFDSHQTITQLTQDSRVDDLQQIHTGIMLSTRLLNDVNQPEEALRKKRA</sequence>
<feature type="chain" id="PRO_1000132681" description="Flagellar transcriptional regulator FlhD">
    <location>
        <begin position="1"/>
        <end position="119"/>
    </location>
</feature>
<feature type="disulfide bond" description="Interchain" evidence="1">
    <location>
        <position position="68"/>
    </location>
</feature>
<keyword id="KW-0010">Activator</keyword>
<keyword id="KW-1005">Bacterial flagellum biogenesis</keyword>
<keyword id="KW-0963">Cytoplasm</keyword>
<keyword id="KW-1015">Disulfide bond</keyword>
<keyword id="KW-0238">DNA-binding</keyword>
<keyword id="KW-0804">Transcription</keyword>
<keyword id="KW-0805">Transcription regulation</keyword>
<reference key="1">
    <citation type="journal article" date="2009" name="PLoS Genet.">
        <title>Organised genome dynamics in the Escherichia coli species results in highly diverse adaptive paths.</title>
        <authorList>
            <person name="Touchon M."/>
            <person name="Hoede C."/>
            <person name="Tenaillon O."/>
            <person name="Barbe V."/>
            <person name="Baeriswyl S."/>
            <person name="Bidet P."/>
            <person name="Bingen E."/>
            <person name="Bonacorsi S."/>
            <person name="Bouchier C."/>
            <person name="Bouvet O."/>
            <person name="Calteau A."/>
            <person name="Chiapello H."/>
            <person name="Clermont O."/>
            <person name="Cruveiller S."/>
            <person name="Danchin A."/>
            <person name="Diard M."/>
            <person name="Dossat C."/>
            <person name="Karoui M.E."/>
            <person name="Frapy E."/>
            <person name="Garry L."/>
            <person name="Ghigo J.M."/>
            <person name="Gilles A.M."/>
            <person name="Johnson J."/>
            <person name="Le Bouguenec C."/>
            <person name="Lescat M."/>
            <person name="Mangenot S."/>
            <person name="Martinez-Jehanne V."/>
            <person name="Matic I."/>
            <person name="Nassif X."/>
            <person name="Oztas S."/>
            <person name="Petit M.A."/>
            <person name="Pichon C."/>
            <person name="Rouy Z."/>
            <person name="Ruf C.S."/>
            <person name="Schneider D."/>
            <person name="Tourret J."/>
            <person name="Vacherie B."/>
            <person name="Vallenet D."/>
            <person name="Medigue C."/>
            <person name="Rocha E.P.C."/>
            <person name="Denamur E."/>
        </authorList>
    </citation>
    <scope>NUCLEOTIDE SEQUENCE [LARGE SCALE GENOMIC DNA]</scope>
    <source>
        <strain>IAI39 / ExPEC</strain>
    </source>
</reference>
<accession>B7NS27</accession>
<comment type="function">
    <text evidence="1">Functions in complex with FlhC as a master transcriptional regulator that regulates transcription of several flagellar and non-flagellar operons by binding to their promoter region. Activates expression of class 2 flagellar genes, including fliA, which is a flagellum-specific sigma factor that turns on the class 3 genes. Also regulates genes whose products function in a variety of physiological pathways.</text>
</comment>
<comment type="subunit">
    <text evidence="1">Homodimer; disulfide-linked. Forms a heterohexamer composed of two FlhC and four FlhD subunits. Each FlhC binds a FlhD dimer, forming a heterotrimer, and a hexamer assembles by dimerization of two heterotrimers.</text>
</comment>
<comment type="subcellular location">
    <subcellularLocation>
        <location evidence="1">Cytoplasm</location>
    </subcellularLocation>
</comment>
<comment type="domain">
    <text evidence="1">The C-terminal region contains a putative helix-turn-helix (HTH) motif, suggesting that this region may bind DNA.</text>
</comment>
<comment type="similarity">
    <text evidence="1">Belongs to the FlhD family.</text>
</comment>
<gene>
    <name evidence="1" type="primary">flhD</name>
    <name type="ordered locus">ECIAI39_1158</name>
</gene>